<keyword id="KW-0285">Flavoprotein</keyword>
<keyword id="KW-0288">FMN</keyword>
<keyword id="KW-0503">Monooxygenase</keyword>
<keyword id="KW-0521">NADP</keyword>
<keyword id="KW-0560">Oxidoreductase</keyword>
<accession>Q6FFZ7</accession>
<evidence type="ECO:0000255" key="1">
    <source>
        <dbReference type="HAMAP-Rule" id="MF_01699"/>
    </source>
</evidence>
<organism>
    <name type="scientific">Acinetobacter baylyi (strain ATCC 33305 / BD413 / ADP1)</name>
    <dbReference type="NCBI Taxonomy" id="62977"/>
    <lineage>
        <taxon>Bacteria</taxon>
        <taxon>Pseudomonadati</taxon>
        <taxon>Pseudomonadota</taxon>
        <taxon>Gammaproteobacteria</taxon>
        <taxon>Moraxellales</taxon>
        <taxon>Moraxellaceae</taxon>
        <taxon>Acinetobacter</taxon>
    </lineage>
</organism>
<sequence>MKIGVFCPIGNNGWLLSENAPQYMPSFELNKKIVQRAEHYGFDFALSMIKLRGFGGKTEFWDHNLETFTLMAGLAAVTSKIKIYATAATLVMPPAIVARMASTIDSISNGRFGLNVVTGWQAPEYSQMGMWPGDEYFAKRYEYLSEYVQILRELWATGQSDFKGEHFQMEDCRVSPQPQAEMKIICAGQSDTGLEFSAQHADYNFVFGKGLNTPTAYAGINDRLKHFTDQTGRDVQTYVLFMVIAAETDAEAMAKWQSYNDGADVEAINWLMNQGGKDTKSGADTNIRQMASSVSPVNINMGTLVGSYEKVAAMLDEIAEIKGTEGILLTFDDFVQGVEDFGERIQPLMTSRQDIVAEYQPVTPLEKSA</sequence>
<comment type="function">
    <text evidence="1">Catalyzes the pyrimidine ring opening between N-3 and C-4 by an unusual flavin hydroperoxide-catalyzed mechanism, adding oxygen atoms in the process to yield ureidoacrylate peracid, that immediately reacts with FMN forming ureidoacrylate and FMN-N(5)-oxide. The FMN-N(5)-oxide reacts spontaneously with NADH to produce FMN. Requires the flavin reductase RutF to regenerate FMN in vivo.</text>
</comment>
<comment type="catalytic activity">
    <reaction evidence="1">
        <text>uracil + FMNH2 + NADH + O2 = (Z)-3-ureidoacrylate + FMN + NAD(+) + H2O + H(+)</text>
        <dbReference type="Rhea" id="RHEA:31587"/>
        <dbReference type="ChEBI" id="CHEBI:15377"/>
        <dbReference type="ChEBI" id="CHEBI:15378"/>
        <dbReference type="ChEBI" id="CHEBI:15379"/>
        <dbReference type="ChEBI" id="CHEBI:17568"/>
        <dbReference type="ChEBI" id="CHEBI:57540"/>
        <dbReference type="ChEBI" id="CHEBI:57618"/>
        <dbReference type="ChEBI" id="CHEBI:57945"/>
        <dbReference type="ChEBI" id="CHEBI:58210"/>
        <dbReference type="ChEBI" id="CHEBI:59891"/>
        <dbReference type="EC" id="1.14.99.46"/>
    </reaction>
</comment>
<comment type="catalytic activity">
    <reaction evidence="1">
        <text>thymine + FMNH2 + NADH + O2 = (Z)-2-methylureidoacrylate + FMN + NAD(+) + H2O + H(+)</text>
        <dbReference type="Rhea" id="RHEA:31599"/>
        <dbReference type="ChEBI" id="CHEBI:15377"/>
        <dbReference type="ChEBI" id="CHEBI:15378"/>
        <dbReference type="ChEBI" id="CHEBI:15379"/>
        <dbReference type="ChEBI" id="CHEBI:17821"/>
        <dbReference type="ChEBI" id="CHEBI:57540"/>
        <dbReference type="ChEBI" id="CHEBI:57618"/>
        <dbReference type="ChEBI" id="CHEBI:57945"/>
        <dbReference type="ChEBI" id="CHEBI:58210"/>
        <dbReference type="ChEBI" id="CHEBI:143783"/>
        <dbReference type="EC" id="1.14.99.46"/>
    </reaction>
</comment>
<comment type="similarity">
    <text evidence="1">Belongs to the NtaA/SnaA/DszA monooxygenase family. RutA subfamily.</text>
</comment>
<name>RUTA_ACIAD</name>
<protein>
    <recommendedName>
        <fullName evidence="1">Pyrimidine monooxygenase RutA</fullName>
        <ecNumber evidence="1">1.14.99.46</ecNumber>
    </recommendedName>
</protein>
<proteinExistence type="inferred from homology"/>
<dbReference type="EC" id="1.14.99.46" evidence="1"/>
<dbReference type="EMBL" id="CR543861">
    <property type="protein sequence ID" value="CAG67010.1"/>
    <property type="molecule type" value="Genomic_DNA"/>
</dbReference>
<dbReference type="RefSeq" id="WP_004930951.1">
    <property type="nucleotide sequence ID" value="NC_005966.1"/>
</dbReference>
<dbReference type="SMR" id="Q6FFZ7"/>
<dbReference type="STRING" id="202950.GCA_001485005_01775"/>
<dbReference type="GeneID" id="45232561"/>
<dbReference type="KEGG" id="aci:ACIAD0027"/>
<dbReference type="eggNOG" id="COG2141">
    <property type="taxonomic scope" value="Bacteria"/>
</dbReference>
<dbReference type="HOGENOM" id="CLU_027853_1_1_6"/>
<dbReference type="OrthoDB" id="9814695at2"/>
<dbReference type="BioCyc" id="ASP62977:ACIAD_RS00145-MONOMER"/>
<dbReference type="Proteomes" id="UP000000430">
    <property type="component" value="Chromosome"/>
</dbReference>
<dbReference type="GO" id="GO:0008726">
    <property type="term" value="F:alkanesulfonate monooxygenase activity"/>
    <property type="evidence" value="ECO:0007669"/>
    <property type="project" value="TreeGrafter"/>
</dbReference>
<dbReference type="GO" id="GO:0052614">
    <property type="term" value="F:uracil oxygenase activity"/>
    <property type="evidence" value="ECO:0007669"/>
    <property type="project" value="UniProtKB-EC"/>
</dbReference>
<dbReference type="GO" id="GO:0046306">
    <property type="term" value="P:alkanesulfonate catabolic process"/>
    <property type="evidence" value="ECO:0007669"/>
    <property type="project" value="TreeGrafter"/>
</dbReference>
<dbReference type="GO" id="GO:0019740">
    <property type="term" value="P:nitrogen utilization"/>
    <property type="evidence" value="ECO:0007669"/>
    <property type="project" value="UniProtKB-UniRule"/>
</dbReference>
<dbReference type="GO" id="GO:0006212">
    <property type="term" value="P:uracil catabolic process"/>
    <property type="evidence" value="ECO:0007669"/>
    <property type="project" value="UniProtKB-UniRule"/>
</dbReference>
<dbReference type="CDD" id="cd01094">
    <property type="entry name" value="Alkanesulfonate_monoxygenase"/>
    <property type="match status" value="1"/>
</dbReference>
<dbReference type="FunFam" id="3.20.20.30:FF:000003">
    <property type="entry name" value="Pyrimidine monooxygenase RutA"/>
    <property type="match status" value="1"/>
</dbReference>
<dbReference type="Gene3D" id="3.20.20.30">
    <property type="entry name" value="Luciferase-like domain"/>
    <property type="match status" value="1"/>
</dbReference>
<dbReference type="HAMAP" id="MF_01699">
    <property type="entry name" value="RutA"/>
    <property type="match status" value="1"/>
</dbReference>
<dbReference type="InterPro" id="IPR011251">
    <property type="entry name" value="Luciferase-like_dom"/>
</dbReference>
<dbReference type="InterPro" id="IPR036661">
    <property type="entry name" value="Luciferase-like_sf"/>
</dbReference>
<dbReference type="InterPro" id="IPR019914">
    <property type="entry name" value="Pyrimidine_monooxygenase_RutA"/>
</dbReference>
<dbReference type="InterPro" id="IPR050172">
    <property type="entry name" value="SsuD_RutA_monooxygenase"/>
</dbReference>
<dbReference type="NCBIfam" id="TIGR03612">
    <property type="entry name" value="RutA"/>
    <property type="match status" value="1"/>
</dbReference>
<dbReference type="PANTHER" id="PTHR42847">
    <property type="entry name" value="ALKANESULFONATE MONOOXYGENASE"/>
    <property type="match status" value="1"/>
</dbReference>
<dbReference type="PANTHER" id="PTHR42847:SF4">
    <property type="entry name" value="ALKANESULFONATE MONOOXYGENASE-RELATED"/>
    <property type="match status" value="1"/>
</dbReference>
<dbReference type="Pfam" id="PF00296">
    <property type="entry name" value="Bac_luciferase"/>
    <property type="match status" value="1"/>
</dbReference>
<dbReference type="SUPFAM" id="SSF51679">
    <property type="entry name" value="Bacterial luciferase-like"/>
    <property type="match status" value="1"/>
</dbReference>
<feature type="chain" id="PRO_0000402581" description="Pyrimidine monooxygenase RutA">
    <location>
        <begin position="1"/>
        <end position="369"/>
    </location>
</feature>
<feature type="binding site" evidence="1">
    <location>
        <begin position="49"/>
        <end position="50"/>
    </location>
    <ligand>
        <name>FMN</name>
        <dbReference type="ChEBI" id="CHEBI:58210"/>
    </ligand>
</feature>
<feature type="binding site" evidence="1">
    <location>
        <position position="115"/>
    </location>
    <ligand>
        <name>FMN</name>
        <dbReference type="ChEBI" id="CHEBI:58210"/>
    </ligand>
</feature>
<feature type="binding site" evidence="1">
    <location>
        <position position="124"/>
    </location>
    <ligand>
        <name>FMN</name>
        <dbReference type="ChEBI" id="CHEBI:58210"/>
    </ligand>
</feature>
<feature type="binding site" evidence="1">
    <location>
        <begin position="140"/>
        <end position="141"/>
    </location>
    <ligand>
        <name>FMN</name>
        <dbReference type="ChEBI" id="CHEBI:58210"/>
    </ligand>
</feature>
<feature type="binding site" evidence="1">
    <location>
        <position position="190"/>
    </location>
    <ligand>
        <name>FMN</name>
        <dbReference type="ChEBI" id="CHEBI:58210"/>
    </ligand>
</feature>
<gene>
    <name evidence="1" type="primary">rutA</name>
    <name type="ordered locus">ACIAD0027</name>
</gene>
<reference key="1">
    <citation type="journal article" date="2004" name="Nucleic Acids Res.">
        <title>Unique features revealed by the genome sequence of Acinetobacter sp. ADP1, a versatile and naturally transformation competent bacterium.</title>
        <authorList>
            <person name="Barbe V."/>
            <person name="Vallenet D."/>
            <person name="Fonknechten N."/>
            <person name="Kreimeyer A."/>
            <person name="Oztas S."/>
            <person name="Labarre L."/>
            <person name="Cruveiller S."/>
            <person name="Robert C."/>
            <person name="Duprat S."/>
            <person name="Wincker P."/>
            <person name="Ornston L.N."/>
            <person name="Weissenbach J."/>
            <person name="Marliere P."/>
            <person name="Cohen G.N."/>
            <person name="Medigue C."/>
        </authorList>
    </citation>
    <scope>NUCLEOTIDE SEQUENCE [LARGE SCALE GENOMIC DNA]</scope>
    <source>
        <strain>ATCC 33305 / BD413 / ADP1</strain>
    </source>
</reference>